<feature type="chain" id="PRO_0000233283" description="Zinc finger protein 705A">
    <location>
        <begin position="1"/>
        <end position="300"/>
    </location>
</feature>
<feature type="domain" description="KRAB" evidence="2">
    <location>
        <begin position="7"/>
        <end position="78"/>
    </location>
</feature>
<feature type="zinc finger region" description="C2H2-type 1" evidence="1">
    <location>
        <begin position="172"/>
        <end position="194"/>
    </location>
</feature>
<feature type="zinc finger region" description="C2H2-type 2" evidence="1">
    <location>
        <begin position="200"/>
        <end position="222"/>
    </location>
</feature>
<feature type="zinc finger region" description="C2H2-type 3" evidence="1">
    <location>
        <begin position="228"/>
        <end position="250"/>
    </location>
</feature>
<feature type="sequence variant" id="VAR_059929" description="In dbSNP:rs10743251.">
    <original>T</original>
    <variation>A</variation>
    <location>
        <position position="126"/>
    </location>
</feature>
<feature type="sequence variant" id="VAR_059930" description="In dbSNP:rs10743252.">
    <original>R</original>
    <variation>C</variation>
    <location>
        <position position="134"/>
    </location>
</feature>
<feature type="sequence variant" id="VAR_033595" description="In dbSNP:rs10743253.">
    <original>K</original>
    <variation>Q</variation>
    <location>
        <position position="142"/>
    </location>
</feature>
<feature type="sequence variant" id="VAR_059931" description="In dbSNP:rs11043758.">
    <original>R</original>
    <variation>H</variation>
    <location>
        <position position="186"/>
    </location>
</feature>
<gene>
    <name type="primary">ZNF705A</name>
</gene>
<comment type="function">
    <text>May be involved in transcriptional regulation.</text>
</comment>
<comment type="subcellular location">
    <subcellularLocation>
        <location evidence="3">Nucleus</location>
    </subcellularLocation>
</comment>
<comment type="similarity">
    <text evidence="3">Belongs to the krueppel C2H2-type zinc-finger protein family.</text>
</comment>
<sequence>MHSLKKVTFEDVAIDFTQEEWAMMDTSKRKLYRDVMLENISHLVSLGYQISKSYIILQLEQGKELWREGREFLQDQNPDRESALKKKHMISMHPITRKDASTSMTMENSLILEDPFECNDSGEDCTHSSTITQRLLTHSGKKPYVSKQCGKSLRNLFSPKPHKQIHTKGKSYQCNLCEKAYTNCFRLRRHKMTHTGERPYACHLCGKAFTQCSHLRRHEKTHTGERPYKCHQCGKAFIQSFNLRRHERTHLGKKCYECDKSGKAFSQSSGFRGNKIIHTGEKPHACLLCGKAFSLSSDLR</sequence>
<keyword id="KW-0238">DNA-binding</keyword>
<keyword id="KW-0479">Metal-binding</keyword>
<keyword id="KW-0539">Nucleus</keyword>
<keyword id="KW-1185">Reference proteome</keyword>
<keyword id="KW-0677">Repeat</keyword>
<keyword id="KW-0804">Transcription</keyword>
<keyword id="KW-0805">Transcription regulation</keyword>
<keyword id="KW-0862">Zinc</keyword>
<keyword id="KW-0863">Zinc-finger</keyword>
<proteinExistence type="evidence at transcript level"/>
<accession>Q6ZN79</accession>
<name>Z705A_HUMAN</name>
<protein>
    <recommendedName>
        <fullName>Zinc finger protein 705A</fullName>
    </recommendedName>
</protein>
<reference key="1">
    <citation type="journal article" date="2004" name="Nat. Genet.">
        <title>Complete sequencing and characterization of 21,243 full-length human cDNAs.</title>
        <authorList>
            <person name="Ota T."/>
            <person name="Suzuki Y."/>
            <person name="Nishikawa T."/>
            <person name="Otsuki T."/>
            <person name="Sugiyama T."/>
            <person name="Irie R."/>
            <person name="Wakamatsu A."/>
            <person name="Hayashi K."/>
            <person name="Sato H."/>
            <person name="Nagai K."/>
            <person name="Kimura K."/>
            <person name="Makita H."/>
            <person name="Sekine M."/>
            <person name="Obayashi M."/>
            <person name="Nishi T."/>
            <person name="Shibahara T."/>
            <person name="Tanaka T."/>
            <person name="Ishii S."/>
            <person name="Yamamoto J."/>
            <person name="Saito K."/>
            <person name="Kawai Y."/>
            <person name="Isono Y."/>
            <person name="Nakamura Y."/>
            <person name="Nagahari K."/>
            <person name="Murakami K."/>
            <person name="Yasuda T."/>
            <person name="Iwayanagi T."/>
            <person name="Wagatsuma M."/>
            <person name="Shiratori A."/>
            <person name="Sudo H."/>
            <person name="Hosoiri T."/>
            <person name="Kaku Y."/>
            <person name="Kodaira H."/>
            <person name="Kondo H."/>
            <person name="Sugawara M."/>
            <person name="Takahashi M."/>
            <person name="Kanda K."/>
            <person name="Yokoi T."/>
            <person name="Furuya T."/>
            <person name="Kikkawa E."/>
            <person name="Omura Y."/>
            <person name="Abe K."/>
            <person name="Kamihara K."/>
            <person name="Katsuta N."/>
            <person name="Sato K."/>
            <person name="Tanikawa M."/>
            <person name="Yamazaki M."/>
            <person name="Ninomiya K."/>
            <person name="Ishibashi T."/>
            <person name="Yamashita H."/>
            <person name="Murakawa K."/>
            <person name="Fujimori K."/>
            <person name="Tanai H."/>
            <person name="Kimata M."/>
            <person name="Watanabe M."/>
            <person name="Hiraoka S."/>
            <person name="Chiba Y."/>
            <person name="Ishida S."/>
            <person name="Ono Y."/>
            <person name="Takiguchi S."/>
            <person name="Watanabe S."/>
            <person name="Yosida M."/>
            <person name="Hotuta T."/>
            <person name="Kusano J."/>
            <person name="Kanehori K."/>
            <person name="Takahashi-Fujii A."/>
            <person name="Hara H."/>
            <person name="Tanase T.-O."/>
            <person name="Nomura Y."/>
            <person name="Togiya S."/>
            <person name="Komai F."/>
            <person name="Hara R."/>
            <person name="Takeuchi K."/>
            <person name="Arita M."/>
            <person name="Imose N."/>
            <person name="Musashino K."/>
            <person name="Yuuki H."/>
            <person name="Oshima A."/>
            <person name="Sasaki N."/>
            <person name="Aotsuka S."/>
            <person name="Yoshikawa Y."/>
            <person name="Matsunawa H."/>
            <person name="Ichihara T."/>
            <person name="Shiohata N."/>
            <person name="Sano S."/>
            <person name="Moriya S."/>
            <person name="Momiyama H."/>
            <person name="Satoh N."/>
            <person name="Takami S."/>
            <person name="Terashima Y."/>
            <person name="Suzuki O."/>
            <person name="Nakagawa S."/>
            <person name="Senoh A."/>
            <person name="Mizoguchi H."/>
            <person name="Goto Y."/>
            <person name="Shimizu F."/>
            <person name="Wakebe H."/>
            <person name="Hishigaki H."/>
            <person name="Watanabe T."/>
            <person name="Sugiyama A."/>
            <person name="Takemoto M."/>
            <person name="Kawakami B."/>
            <person name="Yamazaki M."/>
            <person name="Watanabe K."/>
            <person name="Kumagai A."/>
            <person name="Itakura S."/>
            <person name="Fukuzumi Y."/>
            <person name="Fujimori Y."/>
            <person name="Komiyama M."/>
            <person name="Tashiro H."/>
            <person name="Tanigami A."/>
            <person name="Fujiwara T."/>
            <person name="Ono T."/>
            <person name="Yamada K."/>
            <person name="Fujii Y."/>
            <person name="Ozaki K."/>
            <person name="Hirao M."/>
            <person name="Ohmori Y."/>
            <person name="Kawabata A."/>
            <person name="Hikiji T."/>
            <person name="Kobatake N."/>
            <person name="Inagaki H."/>
            <person name="Ikema Y."/>
            <person name="Okamoto S."/>
            <person name="Okitani R."/>
            <person name="Kawakami T."/>
            <person name="Noguchi S."/>
            <person name="Itoh T."/>
            <person name="Shigeta K."/>
            <person name="Senba T."/>
            <person name="Matsumura K."/>
            <person name="Nakajima Y."/>
            <person name="Mizuno T."/>
            <person name="Morinaga M."/>
            <person name="Sasaki M."/>
            <person name="Togashi T."/>
            <person name="Oyama M."/>
            <person name="Hata H."/>
            <person name="Watanabe M."/>
            <person name="Komatsu T."/>
            <person name="Mizushima-Sugano J."/>
            <person name="Satoh T."/>
            <person name="Shirai Y."/>
            <person name="Takahashi Y."/>
            <person name="Nakagawa K."/>
            <person name="Okumura K."/>
            <person name="Nagase T."/>
            <person name="Nomura N."/>
            <person name="Kikuchi H."/>
            <person name="Masuho Y."/>
            <person name="Yamashita R."/>
            <person name="Nakai K."/>
            <person name="Yada T."/>
            <person name="Nakamura Y."/>
            <person name="Ohara O."/>
            <person name="Isogai T."/>
            <person name="Sugano S."/>
        </authorList>
    </citation>
    <scope>NUCLEOTIDE SEQUENCE [LARGE SCALE MRNA]</scope>
    <source>
        <tissue>Testis</tissue>
    </source>
</reference>
<evidence type="ECO:0000255" key="1">
    <source>
        <dbReference type="PROSITE-ProRule" id="PRU00042"/>
    </source>
</evidence>
<evidence type="ECO:0000255" key="2">
    <source>
        <dbReference type="PROSITE-ProRule" id="PRU00119"/>
    </source>
</evidence>
<evidence type="ECO:0000305" key="3"/>
<dbReference type="EMBL" id="AK131339">
    <property type="protein sequence ID" value="BAD18496.1"/>
    <property type="molecule type" value="mRNA"/>
</dbReference>
<dbReference type="CCDS" id="CCDS31737.1"/>
<dbReference type="RefSeq" id="NP_001004328.1">
    <property type="nucleotide sequence ID" value="NM_001004328.3"/>
</dbReference>
<dbReference type="SMR" id="Q6ZN79"/>
<dbReference type="BioGRID" id="136273">
    <property type="interactions" value="1"/>
</dbReference>
<dbReference type="FunCoup" id="Q6ZN79">
    <property type="interactions" value="14"/>
</dbReference>
<dbReference type="STRING" id="9606.ENSP00000352233"/>
<dbReference type="iPTMnet" id="Q6ZN79"/>
<dbReference type="PhosphoSitePlus" id="Q6ZN79"/>
<dbReference type="BioMuta" id="ZNF705A"/>
<dbReference type="DMDM" id="74758719"/>
<dbReference type="MassIVE" id="Q6ZN79"/>
<dbReference type="PaxDb" id="9606-ENSP00000352233"/>
<dbReference type="PeptideAtlas" id="Q6ZN79"/>
<dbReference type="Antibodypedia" id="82214">
    <property type="antibodies" value="1 antibodies from 1 providers"/>
</dbReference>
<dbReference type="DNASU" id="440077"/>
<dbReference type="Ensembl" id="ENST00000359286.4">
    <property type="protein sequence ID" value="ENSP00000352233.4"/>
    <property type="gene ID" value="ENSG00000196946.11"/>
</dbReference>
<dbReference type="Ensembl" id="ENST00000396570.8">
    <property type="protein sequence ID" value="ENSP00000379816.4"/>
    <property type="gene ID" value="ENSG00000196946.11"/>
</dbReference>
<dbReference type="Ensembl" id="ENST00000610508.4">
    <property type="protein sequence ID" value="ENSP00000481663.1"/>
    <property type="gene ID" value="ENSG00000196946.11"/>
</dbReference>
<dbReference type="GeneID" id="440077"/>
<dbReference type="KEGG" id="hsa:440077"/>
<dbReference type="MANE-Select" id="ENST00000396570.8">
    <property type="protein sequence ID" value="ENSP00000379816.4"/>
    <property type="RefSeq nucleotide sequence ID" value="NM_001004328.3"/>
    <property type="RefSeq protein sequence ID" value="NP_001004328.1"/>
</dbReference>
<dbReference type="UCSC" id="uc001qud.2">
    <property type="organism name" value="human"/>
</dbReference>
<dbReference type="AGR" id="HGNC:32281"/>
<dbReference type="CTD" id="440077"/>
<dbReference type="DisGeNET" id="440077"/>
<dbReference type="GeneCards" id="ZNF705A"/>
<dbReference type="HGNC" id="HGNC:32281">
    <property type="gene designation" value="ZNF705A"/>
</dbReference>
<dbReference type="HPA" id="ENSG00000196946">
    <property type="expression patterns" value="Tissue enhanced (epididymis)"/>
</dbReference>
<dbReference type="neXtProt" id="NX_Q6ZN79"/>
<dbReference type="OpenTargets" id="ENSG00000196946"/>
<dbReference type="PharmGKB" id="PA142670502"/>
<dbReference type="VEuPathDB" id="HostDB:ENSG00000196946"/>
<dbReference type="eggNOG" id="KOG1721">
    <property type="taxonomic scope" value="Eukaryota"/>
</dbReference>
<dbReference type="GeneTree" id="ENSGT00940000163626"/>
<dbReference type="HOGENOM" id="CLU_002678_0_7_1"/>
<dbReference type="InParanoid" id="Q6ZN79"/>
<dbReference type="OMA" id="GEDFTHS"/>
<dbReference type="OrthoDB" id="9520929at2759"/>
<dbReference type="PAN-GO" id="Q6ZN79">
    <property type="GO annotations" value="3 GO annotations based on evolutionary models"/>
</dbReference>
<dbReference type="PhylomeDB" id="Q6ZN79"/>
<dbReference type="TreeFam" id="TF338497"/>
<dbReference type="PathwayCommons" id="Q6ZN79"/>
<dbReference type="Reactome" id="R-HSA-212436">
    <property type="pathway name" value="Generic Transcription Pathway"/>
</dbReference>
<dbReference type="SignaLink" id="Q6ZN79"/>
<dbReference type="BioGRID-ORCS" id="440077">
    <property type="hits" value="27 hits in 1064 CRISPR screens"/>
</dbReference>
<dbReference type="ChiTaRS" id="ZNF705A">
    <property type="organism name" value="human"/>
</dbReference>
<dbReference type="GenomeRNAi" id="440077"/>
<dbReference type="Pharos" id="Q6ZN79">
    <property type="development level" value="Tdark"/>
</dbReference>
<dbReference type="PRO" id="PR:Q6ZN79"/>
<dbReference type="Proteomes" id="UP000005640">
    <property type="component" value="Chromosome 12"/>
</dbReference>
<dbReference type="RNAct" id="Q6ZN79">
    <property type="molecule type" value="protein"/>
</dbReference>
<dbReference type="Bgee" id="ENSG00000196946">
    <property type="expression patterns" value="Expressed in left testis and 28 other cell types or tissues"/>
</dbReference>
<dbReference type="ExpressionAtlas" id="Q6ZN79">
    <property type="expression patterns" value="baseline and differential"/>
</dbReference>
<dbReference type="GO" id="GO:0000785">
    <property type="term" value="C:chromatin"/>
    <property type="evidence" value="ECO:0000247"/>
    <property type="project" value="NTNU_SB"/>
</dbReference>
<dbReference type="GO" id="GO:0005634">
    <property type="term" value="C:nucleus"/>
    <property type="evidence" value="ECO:0000318"/>
    <property type="project" value="GO_Central"/>
</dbReference>
<dbReference type="GO" id="GO:0000981">
    <property type="term" value="F:DNA-binding transcription factor activity, RNA polymerase II-specific"/>
    <property type="evidence" value="ECO:0000247"/>
    <property type="project" value="NTNU_SB"/>
</dbReference>
<dbReference type="GO" id="GO:0000977">
    <property type="term" value="F:RNA polymerase II transcription regulatory region sequence-specific DNA binding"/>
    <property type="evidence" value="ECO:0000318"/>
    <property type="project" value="GO_Central"/>
</dbReference>
<dbReference type="GO" id="GO:0008270">
    <property type="term" value="F:zinc ion binding"/>
    <property type="evidence" value="ECO:0007669"/>
    <property type="project" value="UniProtKB-KW"/>
</dbReference>
<dbReference type="GO" id="GO:0006357">
    <property type="term" value="P:regulation of transcription by RNA polymerase II"/>
    <property type="evidence" value="ECO:0000318"/>
    <property type="project" value="GO_Central"/>
</dbReference>
<dbReference type="CDD" id="cd07765">
    <property type="entry name" value="KRAB_A-box"/>
    <property type="match status" value="1"/>
</dbReference>
<dbReference type="FunFam" id="3.30.160.60:FF:000176">
    <property type="entry name" value="zinc finger protein 70"/>
    <property type="match status" value="1"/>
</dbReference>
<dbReference type="FunFam" id="3.30.160.60:FF:002754">
    <property type="entry name" value="Zinc finger protein 705A"/>
    <property type="match status" value="1"/>
</dbReference>
<dbReference type="FunFam" id="3.30.160.60:FF:002524">
    <property type="entry name" value="Zinc finger protein 705F"/>
    <property type="match status" value="2"/>
</dbReference>
<dbReference type="FunFam" id="3.30.160.60:FF:000787">
    <property type="entry name" value="Zinc finger protein 784"/>
    <property type="match status" value="1"/>
</dbReference>
<dbReference type="FunFam" id="3.30.160.60:FF:003296">
    <property type="entry name" value="Zinc finger protein 844"/>
    <property type="match status" value="1"/>
</dbReference>
<dbReference type="Gene3D" id="6.10.140.140">
    <property type="match status" value="1"/>
</dbReference>
<dbReference type="Gene3D" id="3.30.160.60">
    <property type="entry name" value="Classic Zinc Finger"/>
    <property type="match status" value="6"/>
</dbReference>
<dbReference type="InterPro" id="IPR001909">
    <property type="entry name" value="KRAB"/>
</dbReference>
<dbReference type="InterPro" id="IPR036051">
    <property type="entry name" value="KRAB_dom_sf"/>
</dbReference>
<dbReference type="InterPro" id="IPR036236">
    <property type="entry name" value="Znf_C2H2_sf"/>
</dbReference>
<dbReference type="InterPro" id="IPR013087">
    <property type="entry name" value="Znf_C2H2_type"/>
</dbReference>
<dbReference type="PANTHER" id="PTHR24390:SF237">
    <property type="entry name" value="FI23536P1-RELATED"/>
    <property type="match status" value="1"/>
</dbReference>
<dbReference type="PANTHER" id="PTHR24390">
    <property type="entry name" value="ZINC FINGER PROTEIN"/>
    <property type="match status" value="1"/>
</dbReference>
<dbReference type="Pfam" id="PF01352">
    <property type="entry name" value="KRAB"/>
    <property type="match status" value="1"/>
</dbReference>
<dbReference type="Pfam" id="PF00096">
    <property type="entry name" value="zf-C2H2"/>
    <property type="match status" value="3"/>
</dbReference>
<dbReference type="SMART" id="SM00349">
    <property type="entry name" value="KRAB"/>
    <property type="match status" value="1"/>
</dbReference>
<dbReference type="SMART" id="SM00355">
    <property type="entry name" value="ZnF_C2H2"/>
    <property type="match status" value="3"/>
</dbReference>
<dbReference type="SUPFAM" id="SSF57667">
    <property type="entry name" value="beta-beta-alpha zinc fingers"/>
    <property type="match status" value="4"/>
</dbReference>
<dbReference type="SUPFAM" id="SSF109640">
    <property type="entry name" value="KRAB domain (Kruppel-associated box)"/>
    <property type="match status" value="1"/>
</dbReference>
<dbReference type="PROSITE" id="PS50805">
    <property type="entry name" value="KRAB"/>
    <property type="match status" value="1"/>
</dbReference>
<dbReference type="PROSITE" id="PS00028">
    <property type="entry name" value="ZINC_FINGER_C2H2_1"/>
    <property type="match status" value="3"/>
</dbReference>
<dbReference type="PROSITE" id="PS50157">
    <property type="entry name" value="ZINC_FINGER_C2H2_2"/>
    <property type="match status" value="5"/>
</dbReference>
<organism>
    <name type="scientific">Homo sapiens</name>
    <name type="common">Human</name>
    <dbReference type="NCBI Taxonomy" id="9606"/>
    <lineage>
        <taxon>Eukaryota</taxon>
        <taxon>Metazoa</taxon>
        <taxon>Chordata</taxon>
        <taxon>Craniata</taxon>
        <taxon>Vertebrata</taxon>
        <taxon>Euteleostomi</taxon>
        <taxon>Mammalia</taxon>
        <taxon>Eutheria</taxon>
        <taxon>Euarchontoglires</taxon>
        <taxon>Primates</taxon>
        <taxon>Haplorrhini</taxon>
        <taxon>Catarrhini</taxon>
        <taxon>Hominidae</taxon>
        <taxon>Homo</taxon>
    </lineage>
</organism>